<evidence type="ECO:0000250" key="1"/>
<evidence type="ECO:0000250" key="2">
    <source>
        <dbReference type="UniProtKB" id="Q9UN30"/>
    </source>
</evidence>
<evidence type="ECO:0000255" key="3">
    <source>
        <dbReference type="PROSITE-ProRule" id="PRU00184"/>
    </source>
</evidence>
<evidence type="ECO:0000256" key="4">
    <source>
        <dbReference type="SAM" id="MobiDB-lite"/>
    </source>
</evidence>
<evidence type="ECO:0000305" key="5"/>
<reference key="1">
    <citation type="journal article" date="2008" name="BMC Evol. Biol.">
        <title>Adaptive evolution of SCML1 in primates, a gene involved in male reproduction.</title>
        <authorList>
            <person name="Wu H.-H."/>
            <person name="Su B."/>
        </authorList>
    </citation>
    <scope>NUCLEOTIDE SEQUENCE [GENOMIC DNA]</scope>
</reference>
<keyword id="KW-0539">Nucleus</keyword>
<keyword id="KW-0597">Phosphoprotein</keyword>
<keyword id="KW-0678">Repressor</keyword>
<keyword id="KW-0804">Transcription</keyword>
<keyword id="KW-0805">Transcription regulation</keyword>
<accession>B0FZN9</accession>
<name>SCML1_PONPY</name>
<gene>
    <name type="primary">SCML1</name>
</gene>
<dbReference type="EMBL" id="EU370783">
    <property type="protein sequence ID" value="ABY68578.1"/>
    <property type="molecule type" value="Genomic_DNA"/>
</dbReference>
<dbReference type="SMR" id="B0FZN9"/>
<dbReference type="GO" id="GO:0005634">
    <property type="term" value="C:nucleus"/>
    <property type="evidence" value="ECO:0007669"/>
    <property type="project" value="UniProtKB-SubCell"/>
</dbReference>
<dbReference type="CDD" id="cd09578">
    <property type="entry name" value="SAM_Scm"/>
    <property type="match status" value="1"/>
</dbReference>
<dbReference type="FunFam" id="1.10.150.50:FF:000018">
    <property type="entry name" value="Polycomb protein scmh1 isoform 4"/>
    <property type="match status" value="1"/>
</dbReference>
<dbReference type="Gene3D" id="1.10.150.50">
    <property type="entry name" value="Transcription Factor, Ets-1"/>
    <property type="match status" value="1"/>
</dbReference>
<dbReference type="InterPro" id="IPR001660">
    <property type="entry name" value="SAM"/>
</dbReference>
<dbReference type="InterPro" id="IPR013761">
    <property type="entry name" value="SAM/pointed_sf"/>
</dbReference>
<dbReference type="InterPro" id="IPR047531">
    <property type="entry name" value="SAM_Scm-like"/>
</dbReference>
<dbReference type="PANTHER" id="PTHR47305">
    <property type="entry name" value="BEN DOMAIN-CONTAINING PROTEIN 2"/>
    <property type="match status" value="1"/>
</dbReference>
<dbReference type="PANTHER" id="PTHR47305:SF2">
    <property type="entry name" value="SAM DOMAIN-CONTAINING PROTEIN"/>
    <property type="match status" value="1"/>
</dbReference>
<dbReference type="Pfam" id="PF00536">
    <property type="entry name" value="SAM_1"/>
    <property type="match status" value="1"/>
</dbReference>
<dbReference type="SMART" id="SM00454">
    <property type="entry name" value="SAM"/>
    <property type="match status" value="1"/>
</dbReference>
<dbReference type="SUPFAM" id="SSF47769">
    <property type="entry name" value="SAM/Pointed domain"/>
    <property type="match status" value="1"/>
</dbReference>
<dbReference type="PROSITE" id="PS50105">
    <property type="entry name" value="SAM_DOMAIN"/>
    <property type="match status" value="1"/>
</dbReference>
<organism>
    <name type="scientific">Pongo pygmaeus</name>
    <name type="common">Bornean orangutan</name>
    <dbReference type="NCBI Taxonomy" id="9600"/>
    <lineage>
        <taxon>Eukaryota</taxon>
        <taxon>Metazoa</taxon>
        <taxon>Chordata</taxon>
        <taxon>Craniata</taxon>
        <taxon>Vertebrata</taxon>
        <taxon>Euteleostomi</taxon>
        <taxon>Mammalia</taxon>
        <taxon>Eutheria</taxon>
        <taxon>Euarchontoglires</taxon>
        <taxon>Primates</taxon>
        <taxon>Haplorrhini</taxon>
        <taxon>Catarrhini</taxon>
        <taxon>Hominidae</taxon>
        <taxon>Pongo</taxon>
    </lineage>
</organism>
<protein>
    <recommendedName>
        <fullName>Sex comb on midleg-like protein 1</fullName>
    </recommendedName>
</protein>
<feature type="chain" id="PRO_0000380552" description="Sex comb on midleg-like protein 1">
    <location>
        <begin position="1"/>
        <end position="329"/>
    </location>
</feature>
<feature type="domain" description="SAM" evidence="3">
    <location>
        <begin position="258"/>
        <end position="325"/>
    </location>
</feature>
<feature type="region of interest" description="Disordered" evidence="4">
    <location>
        <begin position="136"/>
        <end position="160"/>
    </location>
</feature>
<feature type="modified residue" description="Phosphoserine" evidence="2">
    <location>
        <position position="138"/>
    </location>
</feature>
<feature type="modified residue" description="Phosphoserine" evidence="2">
    <location>
        <position position="238"/>
    </location>
</feature>
<comment type="function">
    <text evidence="1">Putative Polycomb group (PcG) protein. PcG proteins act by forming multiprotein complexes, which are required to maintain the transcriptionally repressive state of homeotic genes throughout development. May be involved in spermatogenesis during sexual maturation (By similarity).</text>
</comment>
<comment type="subcellular location">
    <subcellularLocation>
        <location evidence="5">Nucleus</location>
    </subcellularLocation>
</comment>
<comment type="similarity">
    <text evidence="5">Belongs to the SCM family.</text>
</comment>
<proteinExistence type="inferred from homology"/>
<sequence>MMSNSSSEIDVVKTRIPTYDEDDDTILYAYETKPEFVNKEPNIVSDASCNTEEQLKTVNDVLIHCQVIYDAMQNLDKKIDVIRRKVSKIQRFHARSLWTNRKRYGYKKYSYRLAKKLKLQKMKKNEVYESFSYPESYSPTLPVSRRENNSPSNLPRPSFCMEEYQPAEPEEDPILSRTPSPVHPSDFSEHNYQPYYASDGAMYGSSSGPCLGNPRADSIHNTYSTDHASAAPPSVTRSPFENDCYIKEGSITKHPSTWSVEAVVLFLKQTDPVALCPLVDLFRSHEIDGKALLLLTSDVLLKHLGVKLGTAVKLCYYIDRLKQGKCFEN</sequence>